<evidence type="ECO:0000250" key="1"/>
<evidence type="ECO:0000255" key="2"/>
<evidence type="ECO:0000255" key="3">
    <source>
        <dbReference type="PROSITE-ProRule" id="PRU00597"/>
    </source>
</evidence>
<evidence type="ECO:0000255" key="4">
    <source>
        <dbReference type="PROSITE-ProRule" id="PRU10056"/>
    </source>
</evidence>
<evidence type="ECO:0000255" key="5">
    <source>
        <dbReference type="PROSITE-ProRule" id="PRU10057"/>
    </source>
</evidence>
<evidence type="ECO:0000256" key="6">
    <source>
        <dbReference type="SAM" id="MobiDB-lite"/>
    </source>
</evidence>
<evidence type="ECO:0000305" key="7"/>
<gene>
    <name type="primary">cbhC</name>
    <name type="ORF">ACLA_062560</name>
</gene>
<reference key="1">
    <citation type="journal article" date="2008" name="PLoS Genet.">
        <title>Genomic islands in the pathogenic filamentous fungus Aspergillus fumigatus.</title>
        <authorList>
            <person name="Fedorova N.D."/>
            <person name="Khaldi N."/>
            <person name="Joardar V.S."/>
            <person name="Maiti R."/>
            <person name="Amedeo P."/>
            <person name="Anderson M.J."/>
            <person name="Crabtree J."/>
            <person name="Silva J.C."/>
            <person name="Badger J.H."/>
            <person name="Albarraq A."/>
            <person name="Angiuoli S."/>
            <person name="Bussey H."/>
            <person name="Bowyer P."/>
            <person name="Cotty P.J."/>
            <person name="Dyer P.S."/>
            <person name="Egan A."/>
            <person name="Galens K."/>
            <person name="Fraser-Liggett C.M."/>
            <person name="Haas B.J."/>
            <person name="Inman J.M."/>
            <person name="Kent R."/>
            <person name="Lemieux S."/>
            <person name="Malavazi I."/>
            <person name="Orvis J."/>
            <person name="Roemer T."/>
            <person name="Ronning C.M."/>
            <person name="Sundaram J.P."/>
            <person name="Sutton G."/>
            <person name="Turner G."/>
            <person name="Venter J.C."/>
            <person name="White O.R."/>
            <person name="Whitty B.R."/>
            <person name="Youngman P."/>
            <person name="Wolfe K.H."/>
            <person name="Goldman G.H."/>
            <person name="Wortman J.R."/>
            <person name="Jiang B."/>
            <person name="Denning D.W."/>
            <person name="Nierman W.C."/>
        </authorList>
    </citation>
    <scope>NUCLEOTIDE SEQUENCE [LARGE SCALE GENOMIC DNA]</scope>
    <source>
        <strain>ATCC 1007 / CBS 513.65 / DSM 816 / NCTC 3887 / NRRL 1 / QM 1276 / 107</strain>
    </source>
</reference>
<feature type="signal peptide" evidence="2">
    <location>
        <begin position="1"/>
        <end position="19"/>
    </location>
</feature>
<feature type="chain" id="PRO_0000394049" description="Probable 1,4-beta-D-glucan cellobiohydrolase C">
    <location>
        <begin position="20"/>
        <end position="464"/>
    </location>
</feature>
<feature type="domain" description="CBM1" evidence="3">
    <location>
        <begin position="20"/>
        <end position="55"/>
    </location>
</feature>
<feature type="region of interest" description="Thr-rich linker">
    <location>
        <begin position="59"/>
        <end position="102"/>
    </location>
</feature>
<feature type="region of interest" description="Disordered" evidence="6">
    <location>
        <begin position="65"/>
        <end position="108"/>
    </location>
</feature>
<feature type="region of interest" description="Catalytic">
    <location>
        <begin position="103"/>
        <end position="464"/>
    </location>
</feature>
<feature type="compositionally biased region" description="Low complexity" evidence="6">
    <location>
        <begin position="65"/>
        <end position="100"/>
    </location>
</feature>
<feature type="active site" evidence="4">
    <location>
        <position position="194"/>
    </location>
</feature>
<feature type="active site" description="Proton donor" evidence="5">
    <location>
        <position position="240"/>
    </location>
</feature>
<feature type="active site" description="Nucleophile" evidence="4">
    <location>
        <position position="419"/>
    </location>
</feature>
<feature type="disulfide bond" evidence="1">
    <location>
        <begin position="27"/>
        <end position="44"/>
    </location>
</feature>
<feature type="disulfide bond" evidence="1">
    <location>
        <begin position="38"/>
        <end position="54"/>
    </location>
</feature>
<feature type="disulfide bond" evidence="1">
    <location>
        <begin position="195"/>
        <end position="254"/>
    </location>
</feature>
<feature type="disulfide bond" evidence="1">
    <location>
        <begin position="386"/>
        <end position="433"/>
    </location>
</feature>
<name>CBHC_ASPCL</name>
<proteinExistence type="inferred from homology"/>
<organism>
    <name type="scientific">Aspergillus clavatus (strain ATCC 1007 / CBS 513.65 / DSM 816 / NCTC 3887 / NRRL 1 / QM 1276 / 107)</name>
    <dbReference type="NCBI Taxonomy" id="344612"/>
    <lineage>
        <taxon>Eukaryota</taxon>
        <taxon>Fungi</taxon>
        <taxon>Dikarya</taxon>
        <taxon>Ascomycota</taxon>
        <taxon>Pezizomycotina</taxon>
        <taxon>Eurotiomycetes</taxon>
        <taxon>Eurotiomycetidae</taxon>
        <taxon>Eurotiales</taxon>
        <taxon>Aspergillaceae</taxon>
        <taxon>Aspergillus</taxon>
        <taxon>Aspergillus subgen. Fumigati</taxon>
    </lineage>
</organism>
<accession>A1CCN4</accession>
<sequence>MKNFAPSLALSLLLPTVQAQQTMWGQCGGAGWSGATDCVAGGVCSTQNAYYAQCLPGATTATTLSTTSKGTTTTTTSSTTSTGGGSSSTTTKTSTSAGPTVTGSPSGNPFSGYQQYANPYYSSEVHTLAIPSMTGALAVKASAVADVPSFVWLDVAAKVPTMGTYLENIRAKNKAGANPPVAGIFVVYDLPDRDCAALASNGEYAIADGGIAKYKAYIDAIRAQLLKYPDVHTILVIEPDSLANLITNINVAKCSGAKDAYLECINYALKQLNLPNVAMYIDAGHGGWLGWDANIGPAAEMYAKVYKDADAPAALRGLAVNVANYNAWTIDTCPSYTQGNKNCDEKRYIHALYPLLKAAGWDARFIMDTGRNGVQPTKQQAQGDWCNVIGTGFGIRPSSETGDDLLDAFVWVKPGAESDGTSDTTAARYDAHCGYTDALKPAPEAGQWFQAYFEQLLTNANPAF</sequence>
<keyword id="KW-0119">Carbohydrate metabolism</keyword>
<keyword id="KW-0136">Cellulose degradation</keyword>
<keyword id="KW-1015">Disulfide bond</keyword>
<keyword id="KW-0326">Glycosidase</keyword>
<keyword id="KW-0378">Hydrolase</keyword>
<keyword id="KW-0624">Polysaccharide degradation</keyword>
<keyword id="KW-1185">Reference proteome</keyword>
<keyword id="KW-0964">Secreted</keyword>
<keyword id="KW-0732">Signal</keyword>
<protein>
    <recommendedName>
        <fullName>Probable 1,4-beta-D-glucan cellobiohydrolase C</fullName>
        <ecNumber>3.2.1.91</ecNumber>
    </recommendedName>
    <alternativeName>
        <fullName>Beta-glucancellobiohydrolase C</fullName>
    </alternativeName>
    <alternativeName>
        <fullName>Exocellobiohydrolase C</fullName>
    </alternativeName>
    <alternativeName>
        <fullName>Exoglucanase C</fullName>
    </alternativeName>
</protein>
<comment type="function">
    <text evidence="1">The biological conversion of cellulose to glucose generally requires three types of hydrolytic enzymes: (1) Endoglucanases which cut internal beta-1,4-glucosidic bonds; (2) Exocellobiohydrolases that cut the disaccharide cellobiose from the non-reducing end of the cellulose polymer chain; (3) Beta-1,4-glucosidases which hydrolyze the cellobiose and other short cello-oligosaccharides to glucose.</text>
</comment>
<comment type="catalytic activity">
    <reaction>
        <text>Hydrolysis of (1-&gt;4)-beta-D-glucosidic linkages in cellulose and cellotetraose, releasing cellobiose from the non-reducing ends of the chains.</text>
        <dbReference type="EC" id="3.2.1.91"/>
    </reaction>
</comment>
<comment type="subcellular location">
    <subcellularLocation>
        <location evidence="1">Secreted</location>
    </subcellularLocation>
</comment>
<comment type="domain">
    <text>Has a modular structure: a carbohydrate-binding module (CBM) at the N-terminus, a linker rich in threonines, and a C-terminal exocellobiohydrolase catalytic module. The genes for catalytic modules and CBMs seem to have evolved separately and have been linked by gene fusion.</text>
</comment>
<comment type="similarity">
    <text evidence="7">Belongs to the glycosyl hydrolase 6 (cellulase B) family.</text>
</comment>
<dbReference type="EC" id="3.2.1.91"/>
<dbReference type="EMBL" id="DS027050">
    <property type="protein sequence ID" value="EAW12291.1"/>
    <property type="molecule type" value="Genomic_DNA"/>
</dbReference>
<dbReference type="RefSeq" id="XP_001273717.1">
    <property type="nucleotide sequence ID" value="XM_001273716.1"/>
</dbReference>
<dbReference type="SMR" id="A1CCN4"/>
<dbReference type="STRING" id="344612.A1CCN4"/>
<dbReference type="EnsemblFungi" id="EAW12291">
    <property type="protein sequence ID" value="EAW12291"/>
    <property type="gene ID" value="ACLA_062560"/>
</dbReference>
<dbReference type="GeneID" id="4706008"/>
<dbReference type="KEGG" id="act:ACLA_062560"/>
<dbReference type="VEuPathDB" id="FungiDB:ACLA_062560"/>
<dbReference type="eggNOG" id="ENOG502QWHE">
    <property type="taxonomic scope" value="Eukaryota"/>
</dbReference>
<dbReference type="HOGENOM" id="CLU_015488_0_0_1"/>
<dbReference type="OMA" id="NDSRCAK"/>
<dbReference type="OrthoDB" id="64893at2759"/>
<dbReference type="Proteomes" id="UP000006701">
    <property type="component" value="Unassembled WGS sequence"/>
</dbReference>
<dbReference type="GO" id="GO:0005576">
    <property type="term" value="C:extracellular region"/>
    <property type="evidence" value="ECO:0007669"/>
    <property type="project" value="UniProtKB-SubCell"/>
</dbReference>
<dbReference type="GO" id="GO:0016162">
    <property type="term" value="F:cellulose 1,4-beta-cellobiosidase activity"/>
    <property type="evidence" value="ECO:0007669"/>
    <property type="project" value="UniProtKB-EC"/>
</dbReference>
<dbReference type="GO" id="GO:0030248">
    <property type="term" value="F:cellulose binding"/>
    <property type="evidence" value="ECO:0007669"/>
    <property type="project" value="InterPro"/>
</dbReference>
<dbReference type="GO" id="GO:0030245">
    <property type="term" value="P:cellulose catabolic process"/>
    <property type="evidence" value="ECO:0007669"/>
    <property type="project" value="UniProtKB-KW"/>
</dbReference>
<dbReference type="FunFam" id="3.20.20.40:FF:000001">
    <property type="entry name" value="Glucanase"/>
    <property type="match status" value="1"/>
</dbReference>
<dbReference type="Gene3D" id="3.20.20.40">
    <property type="entry name" value="1, 4-beta cellobiohydrolase"/>
    <property type="match status" value="1"/>
</dbReference>
<dbReference type="InterPro" id="IPR016288">
    <property type="entry name" value="Beta_cellobiohydrolase"/>
</dbReference>
<dbReference type="InterPro" id="IPR036434">
    <property type="entry name" value="Beta_cellobiohydrolase_sf"/>
</dbReference>
<dbReference type="InterPro" id="IPR035971">
    <property type="entry name" value="CBD_sf"/>
</dbReference>
<dbReference type="InterPro" id="IPR000254">
    <property type="entry name" value="Cellulose-bd_dom_fun"/>
</dbReference>
<dbReference type="InterPro" id="IPR001524">
    <property type="entry name" value="Glyco_hydro_6_CS"/>
</dbReference>
<dbReference type="PANTHER" id="PTHR34876">
    <property type="match status" value="1"/>
</dbReference>
<dbReference type="PANTHER" id="PTHR34876:SF4">
    <property type="entry name" value="1,4-BETA-D-GLUCAN CELLOBIOHYDROLASE C-RELATED"/>
    <property type="match status" value="1"/>
</dbReference>
<dbReference type="Pfam" id="PF00734">
    <property type="entry name" value="CBM_1"/>
    <property type="match status" value="1"/>
</dbReference>
<dbReference type="Pfam" id="PF01341">
    <property type="entry name" value="Glyco_hydro_6"/>
    <property type="match status" value="1"/>
</dbReference>
<dbReference type="PIRSF" id="PIRSF001100">
    <property type="entry name" value="Beta_cellobiohydrolase"/>
    <property type="match status" value="1"/>
</dbReference>
<dbReference type="PRINTS" id="PR00733">
    <property type="entry name" value="GLHYDRLASE6"/>
</dbReference>
<dbReference type="SMART" id="SM00236">
    <property type="entry name" value="fCBD"/>
    <property type="match status" value="1"/>
</dbReference>
<dbReference type="SUPFAM" id="SSF57180">
    <property type="entry name" value="Cellulose-binding domain"/>
    <property type="match status" value="1"/>
</dbReference>
<dbReference type="SUPFAM" id="SSF51989">
    <property type="entry name" value="Glycosyl hydrolases family 6, cellulases"/>
    <property type="match status" value="1"/>
</dbReference>
<dbReference type="PROSITE" id="PS00562">
    <property type="entry name" value="CBM1_1"/>
    <property type="match status" value="1"/>
</dbReference>
<dbReference type="PROSITE" id="PS51164">
    <property type="entry name" value="CBM1_2"/>
    <property type="match status" value="1"/>
</dbReference>
<dbReference type="PROSITE" id="PS00655">
    <property type="entry name" value="GLYCOSYL_HYDROL_F6_1"/>
    <property type="match status" value="1"/>
</dbReference>
<dbReference type="PROSITE" id="PS00656">
    <property type="entry name" value="GLYCOSYL_HYDROL_F6_2"/>
    <property type="match status" value="1"/>
</dbReference>